<proteinExistence type="inferred from homology"/>
<reference key="1">
    <citation type="journal article" date="2008" name="Genome Biol.">
        <title>Encapsulated in silica: genome, proteome and physiology of the thermophilic bacterium Anoxybacillus flavithermus WK1.</title>
        <authorList>
            <person name="Saw J.H."/>
            <person name="Mountain B.W."/>
            <person name="Feng L."/>
            <person name="Omelchenko M.V."/>
            <person name="Hou S."/>
            <person name="Saito J.A."/>
            <person name="Stott M.B."/>
            <person name="Li D."/>
            <person name="Zhao G."/>
            <person name="Wu J."/>
            <person name="Galperin M.Y."/>
            <person name="Koonin E.V."/>
            <person name="Makarova K.S."/>
            <person name="Wolf Y.I."/>
            <person name="Rigden D.J."/>
            <person name="Dunfield P.F."/>
            <person name="Wang L."/>
            <person name="Alam M."/>
        </authorList>
    </citation>
    <scope>NUCLEOTIDE SEQUENCE [LARGE SCALE GENOMIC DNA]</scope>
    <source>
        <strain>DSM 21510 / WK1</strain>
    </source>
</reference>
<name>RS15_ANOFW</name>
<sequence>MALTQERKNEIINQFKIHETDTGSPEVQVAILTEQINNLNDHLRVHRKDHHSRRGLLKMVGRRRNLLTYLRNKDINRYRELINKLGLRR</sequence>
<dbReference type="EMBL" id="CP000922">
    <property type="protein sequence ID" value="ACJ34051.1"/>
    <property type="molecule type" value="Genomic_DNA"/>
</dbReference>
<dbReference type="RefSeq" id="WP_004891005.1">
    <property type="nucleotide sequence ID" value="NC_011567.1"/>
</dbReference>
<dbReference type="SMR" id="B7GG70"/>
<dbReference type="STRING" id="491915.Aflv_1690"/>
<dbReference type="GeneID" id="7037943"/>
<dbReference type="KEGG" id="afl:Aflv_1690"/>
<dbReference type="eggNOG" id="COG0184">
    <property type="taxonomic scope" value="Bacteria"/>
</dbReference>
<dbReference type="HOGENOM" id="CLU_148518_0_0_9"/>
<dbReference type="Proteomes" id="UP000000742">
    <property type="component" value="Chromosome"/>
</dbReference>
<dbReference type="GO" id="GO:0022627">
    <property type="term" value="C:cytosolic small ribosomal subunit"/>
    <property type="evidence" value="ECO:0007669"/>
    <property type="project" value="TreeGrafter"/>
</dbReference>
<dbReference type="GO" id="GO:0019843">
    <property type="term" value="F:rRNA binding"/>
    <property type="evidence" value="ECO:0007669"/>
    <property type="project" value="UniProtKB-UniRule"/>
</dbReference>
<dbReference type="GO" id="GO:0003735">
    <property type="term" value="F:structural constituent of ribosome"/>
    <property type="evidence" value="ECO:0007669"/>
    <property type="project" value="InterPro"/>
</dbReference>
<dbReference type="GO" id="GO:0006412">
    <property type="term" value="P:translation"/>
    <property type="evidence" value="ECO:0007669"/>
    <property type="project" value="UniProtKB-UniRule"/>
</dbReference>
<dbReference type="CDD" id="cd00353">
    <property type="entry name" value="Ribosomal_S15p_S13e"/>
    <property type="match status" value="1"/>
</dbReference>
<dbReference type="FunFam" id="1.10.287.10:FF:000002">
    <property type="entry name" value="30S ribosomal protein S15"/>
    <property type="match status" value="1"/>
</dbReference>
<dbReference type="Gene3D" id="6.10.250.3130">
    <property type="match status" value="1"/>
</dbReference>
<dbReference type="Gene3D" id="1.10.287.10">
    <property type="entry name" value="S15/NS1, RNA-binding"/>
    <property type="match status" value="1"/>
</dbReference>
<dbReference type="HAMAP" id="MF_01343_B">
    <property type="entry name" value="Ribosomal_uS15_B"/>
    <property type="match status" value="1"/>
</dbReference>
<dbReference type="InterPro" id="IPR000589">
    <property type="entry name" value="Ribosomal_uS15"/>
</dbReference>
<dbReference type="InterPro" id="IPR005290">
    <property type="entry name" value="Ribosomal_uS15_bac-type"/>
</dbReference>
<dbReference type="InterPro" id="IPR009068">
    <property type="entry name" value="uS15_NS1_RNA-bd_sf"/>
</dbReference>
<dbReference type="NCBIfam" id="TIGR00952">
    <property type="entry name" value="S15_bact"/>
    <property type="match status" value="1"/>
</dbReference>
<dbReference type="PANTHER" id="PTHR23321">
    <property type="entry name" value="RIBOSOMAL PROTEIN S15, BACTERIAL AND ORGANELLAR"/>
    <property type="match status" value="1"/>
</dbReference>
<dbReference type="PANTHER" id="PTHR23321:SF26">
    <property type="entry name" value="SMALL RIBOSOMAL SUBUNIT PROTEIN US15M"/>
    <property type="match status" value="1"/>
</dbReference>
<dbReference type="Pfam" id="PF00312">
    <property type="entry name" value="Ribosomal_S15"/>
    <property type="match status" value="1"/>
</dbReference>
<dbReference type="SMART" id="SM01387">
    <property type="entry name" value="Ribosomal_S15"/>
    <property type="match status" value="1"/>
</dbReference>
<dbReference type="SUPFAM" id="SSF47060">
    <property type="entry name" value="S15/NS1 RNA-binding domain"/>
    <property type="match status" value="1"/>
</dbReference>
<dbReference type="PROSITE" id="PS00362">
    <property type="entry name" value="RIBOSOMAL_S15"/>
    <property type="match status" value="1"/>
</dbReference>
<organism>
    <name type="scientific">Anoxybacillus flavithermus (strain DSM 21510 / WK1)</name>
    <dbReference type="NCBI Taxonomy" id="491915"/>
    <lineage>
        <taxon>Bacteria</taxon>
        <taxon>Bacillati</taxon>
        <taxon>Bacillota</taxon>
        <taxon>Bacilli</taxon>
        <taxon>Bacillales</taxon>
        <taxon>Anoxybacillaceae</taxon>
        <taxon>Anoxybacillus</taxon>
    </lineage>
</organism>
<gene>
    <name evidence="1" type="primary">rpsO</name>
    <name type="ordered locus">Aflv_1690</name>
</gene>
<accession>B7GG70</accession>
<feature type="chain" id="PRO_1000143071" description="Small ribosomal subunit protein uS15">
    <location>
        <begin position="1"/>
        <end position="89"/>
    </location>
</feature>
<keyword id="KW-0687">Ribonucleoprotein</keyword>
<keyword id="KW-0689">Ribosomal protein</keyword>
<keyword id="KW-0694">RNA-binding</keyword>
<keyword id="KW-0699">rRNA-binding</keyword>
<protein>
    <recommendedName>
        <fullName evidence="1">Small ribosomal subunit protein uS15</fullName>
    </recommendedName>
    <alternativeName>
        <fullName evidence="2">30S ribosomal protein S15</fullName>
    </alternativeName>
</protein>
<evidence type="ECO:0000255" key="1">
    <source>
        <dbReference type="HAMAP-Rule" id="MF_01343"/>
    </source>
</evidence>
<evidence type="ECO:0000305" key="2"/>
<comment type="function">
    <text evidence="1">One of the primary rRNA binding proteins, it binds directly to 16S rRNA where it helps nucleate assembly of the platform of the 30S subunit by binding and bridging several RNA helices of the 16S rRNA.</text>
</comment>
<comment type="function">
    <text evidence="1">Forms an intersubunit bridge (bridge B4) with the 23S rRNA of the 50S subunit in the ribosome.</text>
</comment>
<comment type="subunit">
    <text evidence="1">Part of the 30S ribosomal subunit. Forms a bridge to the 50S subunit in the 70S ribosome, contacting the 23S rRNA.</text>
</comment>
<comment type="similarity">
    <text evidence="1">Belongs to the universal ribosomal protein uS15 family.</text>
</comment>